<comment type="function">
    <text evidence="1">DNA-dependent RNA polymerase catalyzes the transcription of DNA into RNA using the four ribonucleoside triphosphates as substrates.</text>
</comment>
<comment type="catalytic activity">
    <reaction evidence="1">
        <text>RNA(n) + a ribonucleoside 5'-triphosphate = RNA(n+1) + diphosphate</text>
        <dbReference type="Rhea" id="RHEA:21248"/>
        <dbReference type="Rhea" id="RHEA-COMP:14527"/>
        <dbReference type="Rhea" id="RHEA-COMP:17342"/>
        <dbReference type="ChEBI" id="CHEBI:33019"/>
        <dbReference type="ChEBI" id="CHEBI:61557"/>
        <dbReference type="ChEBI" id="CHEBI:140395"/>
        <dbReference type="EC" id="2.7.7.6"/>
    </reaction>
</comment>
<comment type="subunit">
    <text evidence="1">The RNAP catalytic core consists of 2 alpha, 1 beta, 1 beta' and 1 omega subunit. When a sigma factor is associated with the core the holoenzyme is formed, which can initiate transcription.</text>
</comment>
<comment type="similarity">
    <text evidence="1">Belongs to the RNA polymerase beta chain family.</text>
</comment>
<organism>
    <name type="scientific">Myxococcus xanthus (strain DK1622)</name>
    <dbReference type="NCBI Taxonomy" id="246197"/>
    <lineage>
        <taxon>Bacteria</taxon>
        <taxon>Pseudomonadati</taxon>
        <taxon>Myxococcota</taxon>
        <taxon>Myxococcia</taxon>
        <taxon>Myxococcales</taxon>
        <taxon>Cystobacterineae</taxon>
        <taxon>Myxococcaceae</taxon>
        <taxon>Myxococcus</taxon>
    </lineage>
</organism>
<reference key="1">
    <citation type="journal article" date="2006" name="Proc. Natl. Acad. Sci. U.S.A.">
        <title>Evolution of sensory complexity recorded in a myxobacterial genome.</title>
        <authorList>
            <person name="Goldman B.S."/>
            <person name="Nierman W.C."/>
            <person name="Kaiser D."/>
            <person name="Slater S.C."/>
            <person name="Durkin A.S."/>
            <person name="Eisen J.A."/>
            <person name="Ronning C.M."/>
            <person name="Barbazuk W.B."/>
            <person name="Blanchard M."/>
            <person name="Field C."/>
            <person name="Halling C."/>
            <person name="Hinkle G."/>
            <person name="Iartchuk O."/>
            <person name="Kim H.S."/>
            <person name="Mackenzie C."/>
            <person name="Madupu R."/>
            <person name="Miller N."/>
            <person name="Shvartsbeyn A."/>
            <person name="Sullivan S.A."/>
            <person name="Vaudin M."/>
            <person name="Wiegand R."/>
            <person name="Kaplan H.B."/>
        </authorList>
    </citation>
    <scope>NUCLEOTIDE SEQUENCE [LARGE SCALE GENOMIC DNA]</scope>
    <source>
        <strain>DK1622</strain>
    </source>
</reference>
<evidence type="ECO:0000255" key="1">
    <source>
        <dbReference type="HAMAP-Rule" id="MF_01321"/>
    </source>
</evidence>
<evidence type="ECO:0000256" key="2">
    <source>
        <dbReference type="SAM" id="MobiDB-lite"/>
    </source>
</evidence>
<proteinExistence type="inferred from homology"/>
<keyword id="KW-0240">DNA-directed RNA polymerase</keyword>
<keyword id="KW-0548">Nucleotidyltransferase</keyword>
<keyword id="KW-1185">Reference proteome</keyword>
<keyword id="KW-0804">Transcription</keyword>
<keyword id="KW-0808">Transferase</keyword>
<name>RPOB_MYXXD</name>
<accession>Q1D7U3</accession>
<protein>
    <recommendedName>
        <fullName evidence="1">DNA-directed RNA polymerase subunit beta</fullName>
        <shortName evidence="1">RNAP subunit beta</shortName>
        <ecNumber evidence="1">2.7.7.6</ecNumber>
    </recommendedName>
    <alternativeName>
        <fullName evidence="1">RNA polymerase subunit beta</fullName>
    </alternativeName>
    <alternativeName>
        <fullName evidence="1">Transcriptase subunit beta</fullName>
    </alternativeName>
</protein>
<gene>
    <name evidence="1" type="primary">rpoB</name>
    <name type="ordered locus">MXAN_3077</name>
</gene>
<sequence>MPTQIQNNFRVRKTFAKIAKIIDIPNLINIQKQSYEKFLQADIAADKREDLGLQGVFKSVFPIRDFNETSSLEFVSYHLERPKYDVDECHQRGMTYSAPIKVVVRLVVWDKDEETGAQSIRDVKEQEVYFGEIPLMTQNGTFIINGTERVVVSQLHRSPGAFFDHDKGKSHSSGKLLYNARIIPYRGSWIDFEFDHKDLLYVRIDRRRKLPATVLIRALGAVPDTAKKNPLEFKGSTEEILNYYYATETIYLHSAEEFEKSVELELLPGQRATRDIKAKTGELIVKKNRKFTRAAIKKLEAAKMKTLPIDADELFTKVSAYDVVEETNGVVLLECNEEVTQEKVDELLKHGIKEFKVLFIDNLNVGPYLRETLMLDKLETPEQSIMEIYRRLRPGDPPTPETAINLFTNLFFNPERYDLSKVGRLKLNFKFGLEEPLDGQILTKRDILEVIRYLIDLKNGKGTIDDIDHLGNRRVRAVGELLENQYRIGLVRMERAIKERMSLQEIETLMPHDLINAKPVTAVIKEFFGSSQLSQFMDQTNPLSEVTHKRRLSALGPGGLTRERAGFEVRDVHPTHYGRICPIETPEGPNIGLIASLSTYARVNEFGFVETPYRKVEAGVVTNDVAFYSALEEEKHTIAQANAETDKKGKFANALVSSRRGGEFVQARAEDVDLMDVSPKQLVSVAASLIPFLENDDANRALMGSNMQRQAVPLLRTAAPLVGTGIESIVARDSGVTCVARRDGIVESVDAGRIVVKADVPASLSDVTSEVDIYNLLKYQRSNQNTCLNQKPIISKGDRVMKGDVIADGPATETGELALGQNVVVAFMPWQGYNFEDSILISERILKDDVFTSIHIEEFECIARDTKLGKEEITRDIPNVGEEALKDLDESGIIRIGAEVKPGDVLVGKITPKGETQLSPEEKLLRAIFGEKAGDVRDSSLRVPPGVVGTVINAKVFSRKGVEKDERAKQIESMEEAKLLKDQNDEIKVLQDSAFGRIRGLVRTKEVQGKLVDDKGKILLKKGDILDDELLSTVPYKYWGEISVGDPLDSRLRDILRNLEETKEAVKLAFGEKIARIKKGDELPPGVIKMVKVYVAIKRKLAVGDKMAGRHGNKGVVSRILPEEDMPYLEDGRPVDIVLNPLGVPSRMNIGQILETHLGWAAKGTGEALQRYVEANWSSDAIKERLKVIYSDPAFGEFLDKLDDEEIKQLCLRSKRGIHVATPVFDGAQETEIHALLDEGQLPRSGQMVLFDGRTGEPFDQNVTVGVMYMLKLHHLVDEKIHARSIGPYSLVTQQPLGGKAQFGGQRLGEMEVWAMEAYGAAYTLQEFLTVKSDDVVGRTRMYEAIVKGDNVLESGLPESFNVLLKELQSLALDVELLESAPPERQRSFGGDFLGGGDGEERKTGTEA</sequence>
<feature type="chain" id="PRO_0000300356" description="DNA-directed RNA polymerase subunit beta">
    <location>
        <begin position="1"/>
        <end position="1408"/>
    </location>
</feature>
<feature type="region of interest" description="Disordered" evidence="2">
    <location>
        <begin position="1383"/>
        <end position="1408"/>
    </location>
</feature>
<feature type="compositionally biased region" description="Basic and acidic residues" evidence="2">
    <location>
        <begin position="1399"/>
        <end position="1408"/>
    </location>
</feature>
<dbReference type="EC" id="2.7.7.6" evidence="1"/>
<dbReference type="EMBL" id="CP000113">
    <property type="protein sequence ID" value="ABF90369.1"/>
    <property type="molecule type" value="Genomic_DNA"/>
</dbReference>
<dbReference type="RefSeq" id="WP_011553127.1">
    <property type="nucleotide sequence ID" value="NC_008095.1"/>
</dbReference>
<dbReference type="SMR" id="Q1D7U3"/>
<dbReference type="STRING" id="246197.MXAN_3077"/>
<dbReference type="EnsemblBacteria" id="ABF90369">
    <property type="protein sequence ID" value="ABF90369"/>
    <property type="gene ID" value="MXAN_3077"/>
</dbReference>
<dbReference type="GeneID" id="41360439"/>
<dbReference type="KEGG" id="mxa:MXAN_3077"/>
<dbReference type="eggNOG" id="COG0085">
    <property type="taxonomic scope" value="Bacteria"/>
</dbReference>
<dbReference type="HOGENOM" id="CLU_000524_4_0_7"/>
<dbReference type="OrthoDB" id="9803954at2"/>
<dbReference type="Proteomes" id="UP000002402">
    <property type="component" value="Chromosome"/>
</dbReference>
<dbReference type="GO" id="GO:0000428">
    <property type="term" value="C:DNA-directed RNA polymerase complex"/>
    <property type="evidence" value="ECO:0007669"/>
    <property type="project" value="UniProtKB-KW"/>
</dbReference>
<dbReference type="GO" id="GO:0003677">
    <property type="term" value="F:DNA binding"/>
    <property type="evidence" value="ECO:0007669"/>
    <property type="project" value="UniProtKB-UniRule"/>
</dbReference>
<dbReference type="GO" id="GO:0003899">
    <property type="term" value="F:DNA-directed RNA polymerase activity"/>
    <property type="evidence" value="ECO:0007669"/>
    <property type="project" value="UniProtKB-UniRule"/>
</dbReference>
<dbReference type="GO" id="GO:0032549">
    <property type="term" value="F:ribonucleoside binding"/>
    <property type="evidence" value="ECO:0007669"/>
    <property type="project" value="InterPro"/>
</dbReference>
<dbReference type="GO" id="GO:0006351">
    <property type="term" value="P:DNA-templated transcription"/>
    <property type="evidence" value="ECO:0007669"/>
    <property type="project" value="UniProtKB-UniRule"/>
</dbReference>
<dbReference type="CDD" id="cd00653">
    <property type="entry name" value="RNA_pol_B_RPB2"/>
    <property type="match status" value="1"/>
</dbReference>
<dbReference type="FunFam" id="3.90.1800.10:FF:000001">
    <property type="entry name" value="DNA-directed RNA polymerase subunit beta"/>
    <property type="match status" value="1"/>
</dbReference>
<dbReference type="Gene3D" id="2.40.50.100">
    <property type="match status" value="1"/>
</dbReference>
<dbReference type="Gene3D" id="2.40.50.150">
    <property type="match status" value="1"/>
</dbReference>
<dbReference type="Gene3D" id="3.90.1100.10">
    <property type="match status" value="2"/>
</dbReference>
<dbReference type="Gene3D" id="2.30.150.10">
    <property type="entry name" value="DNA-directed RNA polymerase, beta subunit, external 1 domain"/>
    <property type="match status" value="1"/>
</dbReference>
<dbReference type="Gene3D" id="2.40.270.10">
    <property type="entry name" value="DNA-directed RNA polymerase, subunit 2, domain 6"/>
    <property type="match status" value="1"/>
</dbReference>
<dbReference type="Gene3D" id="3.90.1800.10">
    <property type="entry name" value="RNA polymerase alpha subunit dimerisation domain"/>
    <property type="match status" value="1"/>
</dbReference>
<dbReference type="Gene3D" id="3.90.1110.10">
    <property type="entry name" value="RNA polymerase Rpb2, domain 2"/>
    <property type="match status" value="1"/>
</dbReference>
<dbReference type="HAMAP" id="MF_01321">
    <property type="entry name" value="RNApol_bact_RpoB"/>
    <property type="match status" value="1"/>
</dbReference>
<dbReference type="InterPro" id="IPR042107">
    <property type="entry name" value="DNA-dir_RNA_pol_bsu_ext_1_sf"/>
</dbReference>
<dbReference type="InterPro" id="IPR019462">
    <property type="entry name" value="DNA-dir_RNA_pol_bsu_external_1"/>
</dbReference>
<dbReference type="InterPro" id="IPR015712">
    <property type="entry name" value="DNA-dir_RNA_pol_su2"/>
</dbReference>
<dbReference type="InterPro" id="IPR007120">
    <property type="entry name" value="DNA-dir_RNAP_su2_dom"/>
</dbReference>
<dbReference type="InterPro" id="IPR037033">
    <property type="entry name" value="DNA-dir_RNAP_su2_hyb_sf"/>
</dbReference>
<dbReference type="InterPro" id="IPR010243">
    <property type="entry name" value="RNA_pol_bsu_bac"/>
</dbReference>
<dbReference type="InterPro" id="IPR007121">
    <property type="entry name" value="RNA_pol_bsu_CS"/>
</dbReference>
<dbReference type="InterPro" id="IPR007644">
    <property type="entry name" value="RNA_pol_bsu_protrusion"/>
</dbReference>
<dbReference type="InterPro" id="IPR007642">
    <property type="entry name" value="RNA_pol_Rpb2_2"/>
</dbReference>
<dbReference type="InterPro" id="IPR037034">
    <property type="entry name" value="RNA_pol_Rpb2_2_sf"/>
</dbReference>
<dbReference type="InterPro" id="IPR007645">
    <property type="entry name" value="RNA_pol_Rpb2_3"/>
</dbReference>
<dbReference type="InterPro" id="IPR007641">
    <property type="entry name" value="RNA_pol_Rpb2_7"/>
</dbReference>
<dbReference type="InterPro" id="IPR014724">
    <property type="entry name" value="RNA_pol_RPB2_OB-fold"/>
</dbReference>
<dbReference type="NCBIfam" id="NF001616">
    <property type="entry name" value="PRK00405.1"/>
    <property type="match status" value="1"/>
</dbReference>
<dbReference type="NCBIfam" id="TIGR02013">
    <property type="entry name" value="rpoB"/>
    <property type="match status" value="1"/>
</dbReference>
<dbReference type="PANTHER" id="PTHR20856">
    <property type="entry name" value="DNA-DIRECTED RNA POLYMERASE I SUBUNIT 2"/>
    <property type="match status" value="1"/>
</dbReference>
<dbReference type="Pfam" id="PF04563">
    <property type="entry name" value="RNA_pol_Rpb2_1"/>
    <property type="match status" value="1"/>
</dbReference>
<dbReference type="Pfam" id="PF04561">
    <property type="entry name" value="RNA_pol_Rpb2_2"/>
    <property type="match status" value="2"/>
</dbReference>
<dbReference type="Pfam" id="PF04565">
    <property type="entry name" value="RNA_pol_Rpb2_3"/>
    <property type="match status" value="1"/>
</dbReference>
<dbReference type="Pfam" id="PF10385">
    <property type="entry name" value="RNA_pol_Rpb2_45"/>
    <property type="match status" value="1"/>
</dbReference>
<dbReference type="Pfam" id="PF00562">
    <property type="entry name" value="RNA_pol_Rpb2_6"/>
    <property type="match status" value="1"/>
</dbReference>
<dbReference type="Pfam" id="PF04560">
    <property type="entry name" value="RNA_pol_Rpb2_7"/>
    <property type="match status" value="1"/>
</dbReference>
<dbReference type="SUPFAM" id="SSF64484">
    <property type="entry name" value="beta and beta-prime subunits of DNA dependent RNA-polymerase"/>
    <property type="match status" value="1"/>
</dbReference>
<dbReference type="PROSITE" id="PS01166">
    <property type="entry name" value="RNA_POL_BETA"/>
    <property type="match status" value="1"/>
</dbReference>